<reference key="1">
    <citation type="journal article" date="2000" name="Mol. Gen. Genet.">
        <title>Ambient pH signalling in ascomycetous yeasts involves homologues of the Aspergillus nidulans genes palF and palH.</title>
        <authorList>
            <person name="Treton B."/>
            <person name="Blanchin-Roland S."/>
            <person name="Lambert M."/>
            <person name="Lepingle A."/>
            <person name="Gaillardin C."/>
        </authorList>
    </citation>
    <scope>NUCLEOTIDE SEQUENCE [GENOMIC DNA]</scope>
    <scope>FUNCTION</scope>
    <source>
        <strain>ATCC 20460 / W29 / CBS 7504 / IFP29</strain>
    </source>
</reference>
<reference key="2">
    <citation type="journal article" date="2004" name="Nature">
        <title>Genome evolution in yeasts.</title>
        <authorList>
            <person name="Dujon B."/>
            <person name="Sherman D."/>
            <person name="Fischer G."/>
            <person name="Durrens P."/>
            <person name="Casaregola S."/>
            <person name="Lafontaine I."/>
            <person name="de Montigny J."/>
            <person name="Marck C."/>
            <person name="Neuveglise C."/>
            <person name="Talla E."/>
            <person name="Goffard N."/>
            <person name="Frangeul L."/>
            <person name="Aigle M."/>
            <person name="Anthouard V."/>
            <person name="Babour A."/>
            <person name="Barbe V."/>
            <person name="Barnay S."/>
            <person name="Blanchin S."/>
            <person name="Beckerich J.-M."/>
            <person name="Beyne E."/>
            <person name="Bleykasten C."/>
            <person name="Boisrame A."/>
            <person name="Boyer J."/>
            <person name="Cattolico L."/>
            <person name="Confanioleri F."/>
            <person name="de Daruvar A."/>
            <person name="Despons L."/>
            <person name="Fabre E."/>
            <person name="Fairhead C."/>
            <person name="Ferry-Dumazet H."/>
            <person name="Groppi A."/>
            <person name="Hantraye F."/>
            <person name="Hennequin C."/>
            <person name="Jauniaux N."/>
            <person name="Joyet P."/>
            <person name="Kachouri R."/>
            <person name="Kerrest A."/>
            <person name="Koszul R."/>
            <person name="Lemaire M."/>
            <person name="Lesur I."/>
            <person name="Ma L."/>
            <person name="Muller H."/>
            <person name="Nicaud J.-M."/>
            <person name="Nikolski M."/>
            <person name="Oztas S."/>
            <person name="Ozier-Kalogeropoulos O."/>
            <person name="Pellenz S."/>
            <person name="Potier S."/>
            <person name="Richard G.-F."/>
            <person name="Straub M.-L."/>
            <person name="Suleau A."/>
            <person name="Swennen D."/>
            <person name="Tekaia F."/>
            <person name="Wesolowski-Louvel M."/>
            <person name="Westhof E."/>
            <person name="Wirth B."/>
            <person name="Zeniou-Meyer M."/>
            <person name="Zivanovic Y."/>
            <person name="Bolotin-Fukuhara M."/>
            <person name="Thierry A."/>
            <person name="Bouchier C."/>
            <person name="Caudron B."/>
            <person name="Scarpelli C."/>
            <person name="Gaillardin C."/>
            <person name="Weissenbach J."/>
            <person name="Wincker P."/>
            <person name="Souciet J.-L."/>
        </authorList>
    </citation>
    <scope>NUCLEOTIDE SEQUENCE [LARGE SCALE GENOMIC DNA]</scope>
    <source>
        <strain>CLIB 122 / E 150</strain>
    </source>
</reference>
<reference key="3">
    <citation type="journal article" date="2002" name="Genetics">
        <title>Genetic control of extracellular protease synthesis in the yeast Yarrowia lipolytica.</title>
        <authorList>
            <person name="Gonzalez-Lopez C.I."/>
            <person name="Szabo R."/>
            <person name="Blanchin-Roland S."/>
            <person name="Gaillardin C."/>
        </authorList>
    </citation>
    <scope>FUNCTION</scope>
</reference>
<evidence type="ECO:0000256" key="1">
    <source>
        <dbReference type="SAM" id="MobiDB-lite"/>
    </source>
</evidence>
<evidence type="ECO:0000269" key="2">
    <source>
    </source>
</evidence>
<evidence type="ECO:0000269" key="3">
    <source>
    </source>
</evidence>
<evidence type="ECO:0000305" key="4"/>
<dbReference type="EMBL" id="AJ133772">
    <property type="protein sequence ID" value="CAB59340.1"/>
    <property type="molecule type" value="Genomic_DNA"/>
</dbReference>
<dbReference type="EMBL" id="CR382130">
    <property type="protein sequence ID" value="CAG81211.1"/>
    <property type="molecule type" value="Genomic_DNA"/>
</dbReference>
<dbReference type="RefSeq" id="XP_503019.1">
    <property type="nucleotide sequence ID" value="XM_503019.1"/>
</dbReference>
<dbReference type="STRING" id="284591.Q9UVF5"/>
<dbReference type="EnsemblFungi" id="CAG81211">
    <property type="protein sequence ID" value="CAG81211"/>
    <property type="gene ID" value="YALI0_D19162g"/>
</dbReference>
<dbReference type="KEGG" id="yli:2910312"/>
<dbReference type="VEuPathDB" id="FungiDB:YALI0_D19162g"/>
<dbReference type="HOGENOM" id="CLU_326837_0_0_1"/>
<dbReference type="InParanoid" id="Q9UVF5"/>
<dbReference type="OrthoDB" id="123481at4891"/>
<dbReference type="Proteomes" id="UP000001300">
    <property type="component" value="Chromosome D"/>
</dbReference>
<dbReference type="GO" id="GO:0016592">
    <property type="term" value="C:mediator complex"/>
    <property type="evidence" value="ECO:0000318"/>
    <property type="project" value="GO_Central"/>
</dbReference>
<dbReference type="GO" id="GO:0005667">
    <property type="term" value="C:transcription regulator complex"/>
    <property type="evidence" value="ECO:0000318"/>
    <property type="project" value="GO_Central"/>
</dbReference>
<dbReference type="GO" id="GO:0045944">
    <property type="term" value="P:positive regulation of transcription by RNA polymerase II"/>
    <property type="evidence" value="ECO:0000318"/>
    <property type="project" value="GO_Central"/>
</dbReference>
<dbReference type="Gene3D" id="2.60.40.640">
    <property type="match status" value="3"/>
</dbReference>
<dbReference type="InterPro" id="IPR014752">
    <property type="entry name" value="Arrestin-like_C"/>
</dbReference>
<dbReference type="InterPro" id="IPR011021">
    <property type="entry name" value="Arrestin-like_N"/>
</dbReference>
<dbReference type="InterPro" id="IPR011022">
    <property type="entry name" value="Arrestin_C-like"/>
</dbReference>
<dbReference type="InterPro" id="IPR050357">
    <property type="entry name" value="Arrestin_domain-protein"/>
</dbReference>
<dbReference type="PANTHER" id="PTHR11188">
    <property type="entry name" value="ARRESTIN DOMAIN CONTAINING PROTEIN"/>
    <property type="match status" value="1"/>
</dbReference>
<dbReference type="PANTHER" id="PTHR11188:SF161">
    <property type="entry name" value="PH-RESPONSE REGULATOR PROTEIN PALF_RIM8"/>
    <property type="match status" value="1"/>
</dbReference>
<dbReference type="Pfam" id="PF02752">
    <property type="entry name" value="Arrestin_C"/>
    <property type="match status" value="1"/>
</dbReference>
<dbReference type="Pfam" id="PF00339">
    <property type="entry name" value="Arrestin_N"/>
    <property type="match status" value="1"/>
</dbReference>
<dbReference type="SMART" id="SM01017">
    <property type="entry name" value="Arrestin_C"/>
    <property type="match status" value="1"/>
</dbReference>
<protein>
    <recommendedName>
        <fullName>pH-response regulator protein palF/RIM8</fullName>
    </recommendedName>
</protein>
<organism>
    <name type="scientific">Yarrowia lipolytica (strain CLIB 122 / E 150)</name>
    <name type="common">Yeast</name>
    <name type="synonym">Candida lipolytica</name>
    <dbReference type="NCBI Taxonomy" id="284591"/>
    <lineage>
        <taxon>Eukaryota</taxon>
        <taxon>Fungi</taxon>
        <taxon>Dikarya</taxon>
        <taxon>Ascomycota</taxon>
        <taxon>Saccharomycotina</taxon>
        <taxon>Dipodascomycetes</taxon>
        <taxon>Dipodascales</taxon>
        <taxon>Dipodascales incertae sedis</taxon>
        <taxon>Yarrowia</taxon>
    </lineage>
</organism>
<comment type="function">
    <text evidence="2 3">Required for the proteolytic cleavage of the transcription factor RIM101 in response to alkaline ambient pH.</text>
</comment>
<comment type="similarity">
    <text evidence="4">Belongs to the arrestin family. PalF/RIM8 subfamily.</text>
</comment>
<feature type="chain" id="PRO_0000058193" description="pH-response regulator protein palF/RIM8">
    <location>
        <begin position="1"/>
        <end position="881"/>
    </location>
</feature>
<feature type="region of interest" description="Disordered" evidence="1">
    <location>
        <begin position="90"/>
        <end position="223"/>
    </location>
</feature>
<feature type="region of interest" description="Disordered" evidence="1">
    <location>
        <begin position="242"/>
        <end position="280"/>
    </location>
</feature>
<feature type="region of interest" description="Disordered" evidence="1">
    <location>
        <begin position="515"/>
        <end position="612"/>
    </location>
</feature>
<feature type="region of interest" description="Disordered" evidence="1">
    <location>
        <begin position="779"/>
        <end position="881"/>
    </location>
</feature>
<feature type="compositionally biased region" description="Low complexity" evidence="1">
    <location>
        <begin position="93"/>
        <end position="116"/>
    </location>
</feature>
<feature type="compositionally biased region" description="Polar residues" evidence="1">
    <location>
        <begin position="117"/>
        <end position="128"/>
    </location>
</feature>
<feature type="compositionally biased region" description="Low complexity" evidence="1">
    <location>
        <begin position="129"/>
        <end position="177"/>
    </location>
</feature>
<feature type="compositionally biased region" description="Polar residues" evidence="1">
    <location>
        <begin position="178"/>
        <end position="215"/>
    </location>
</feature>
<feature type="compositionally biased region" description="Polar residues" evidence="1">
    <location>
        <begin position="242"/>
        <end position="261"/>
    </location>
</feature>
<feature type="compositionally biased region" description="Low complexity" evidence="1">
    <location>
        <begin position="269"/>
        <end position="278"/>
    </location>
</feature>
<feature type="compositionally biased region" description="Low complexity" evidence="1">
    <location>
        <begin position="523"/>
        <end position="535"/>
    </location>
</feature>
<feature type="compositionally biased region" description="Low complexity" evidence="1">
    <location>
        <begin position="551"/>
        <end position="560"/>
    </location>
</feature>
<feature type="compositionally biased region" description="Polar residues" evidence="1">
    <location>
        <begin position="571"/>
        <end position="587"/>
    </location>
</feature>
<feature type="compositionally biased region" description="Polar residues" evidence="1">
    <location>
        <begin position="595"/>
        <end position="610"/>
    </location>
</feature>
<feature type="compositionally biased region" description="Low complexity" evidence="1">
    <location>
        <begin position="787"/>
        <end position="796"/>
    </location>
</feature>
<feature type="compositionally biased region" description="Low complexity" evidence="1">
    <location>
        <begin position="810"/>
        <end position="819"/>
    </location>
</feature>
<feature type="compositionally biased region" description="Low complexity" evidence="1">
    <location>
        <begin position="828"/>
        <end position="845"/>
    </location>
</feature>
<feature type="compositionally biased region" description="Polar residues" evidence="1">
    <location>
        <begin position="846"/>
        <end position="873"/>
    </location>
</feature>
<accession>Q9UVF5</accession>
<accession>Q6C8J3</accession>
<name>PALF_YARLI</name>
<keyword id="KW-1185">Reference proteome</keyword>
<sequence length="881" mass="93141">MKSAFNKLRPNFWSRLTPSSDGDYFFVELEDAHRTWHPGDTVHGNVILVLYKPQRISSVDLSFAGNVVVKSALVKGKGSRSVLFEQKLRLHGTPTAGSNSNTTPSSGNHNSHVSNSATNSNRNSGSHMSTRTSNRNSNSHVASNTPSMSTSPTSTSSGVAATADTTTTMDTNTSQASSTAPDTLNPSSSTELSRTATRQSSDGSIWRSVGSSTPGAASGGVADMMMNSVTTEPVLSSRMSMHTTNSHLSQMSRESHVTTASRESHMSRESNTSTSSTSEELEIGEHRFAFILEIPQKGLFNSLEFERGSISYVITAVAKRHGPLPALHAKRVLQLVCPVDVARLPPPKPSTLSVEIQKRKKQQGIITTTLEVGRGGYLRGESFPVKITIQHVKCVKCLRGLVVTLCRFSKVTCNDDEPQSFRKDLSQTVSPLYTDPVTFSSTVSTTLRIPPDVFPTTKGHGLVSFNYCVEVVIDLAGKWDLEEDRTGFLHTDRLKRNKGVVSLWTEVIIGTDRRRYRSDSHATAHTNTNHVTNHVSQNHGSPGHVNFGHVPSPSGSSNHGNGHGAYGVGHASQSSSPGNHSNYSYHGNPNHGASHINNHVTAGSSHTSGGLSEKQLMKLREEALLPSEPAAISSPSLDAFPSAPEYAIGDEVAGSSAGPSAPSAPAHTIAGVVASAPLTPSDKHENELLRLQGLSSDPYADEDHVPQYKEKEKAPEEVVAMQLNELASVPPIEGEIEEVGNSANAPSAPVMNGHEGGFFDAPSEFSESSAPPVVHGHVHGHVHGHSHSSTGTIVSGDASASAPAPTSIRSVSTAPSDTPTAPPVITHGFTGPVGPGVVDPGTSGTASTTVDSLNSEISSGTPASTLPDTNKSLSDSDDIYS</sequence>
<gene>
    <name type="primary">RIM8</name>
    <name type="synonym">PAL3</name>
    <name type="ordered locus">YALI0D19162g</name>
</gene>
<proteinExistence type="inferred from homology"/>